<sequence>MSGLHILAFGAHADDVEIGMAGTIAKYTKQGYEVGICDLTEADLSSNGTIELRKEEAKVAARIMGVKTRLNLAMPDRGLYMKEEYIREIVKVIRTYKPKLVFAPYYEDRHPDHANCAKLVEEAIFSAGIRKYMPELSPHRVESFYNYMINGFHKPNFCIDISEYLSIKVEALEAYESQFSTGSDGVKTPLTEGYVETVIAREKMFGKEVGVLYAEGFMSKKPVLLHADLLGGCK</sequence>
<comment type="function">
    <text evidence="3">Involved in bacillithiol (BSH) biosynthesis. Catalyzes the second step of the pathway, the deacetylation of N-acetylglucosaminylmalate (GlcNAc-Mal) to glucosamine malate (GlcN-Mal).</text>
</comment>
<comment type="catalytic activity">
    <reaction evidence="3">
        <text>(S)-malyl N-acetyl-alpha-D-glucosaminide + H2O = (S)-malyl alpha-D-glucosaminide + acetate</text>
        <dbReference type="Rhea" id="RHEA:33411"/>
        <dbReference type="ChEBI" id="CHEBI:15377"/>
        <dbReference type="ChEBI" id="CHEBI:30089"/>
        <dbReference type="ChEBI" id="CHEBI:64870"/>
        <dbReference type="ChEBI" id="CHEBI:64871"/>
    </reaction>
</comment>
<comment type="cofactor">
    <cofactor evidence="2">
        <name>Zn(2+)</name>
        <dbReference type="ChEBI" id="CHEBI:29105"/>
    </cofactor>
</comment>
<comment type="biophysicochemical properties">
    <kinetics>
        <KM evidence="3">0.2 mM for GlcNAc-Mal</KM>
        <KM evidence="3">16.9 mM for GlcNAc</KM>
        <text evidence="3">kcat is 10.8 sec(-1) with GlcNAc-Mal as substrate. kcat is 0.002 sec(-1) with GlcNAc as substrate.</text>
    </kinetics>
</comment>
<comment type="subunit">
    <text evidence="2">Homohexamer. Trimer of dimers.</text>
</comment>
<comment type="similarity">
    <text evidence="6">Belongs to the PIGL family.</text>
</comment>
<organism>
    <name type="scientific">Bacillus cereus (strain ATCC 14579 / DSM 31 / CCUG 7414 / JCM 2152 / NBRC 15305 / NCIMB 9373 / NCTC 2599 / NRRL B-3711)</name>
    <dbReference type="NCBI Taxonomy" id="226900"/>
    <lineage>
        <taxon>Bacteria</taxon>
        <taxon>Bacillati</taxon>
        <taxon>Bacillota</taxon>
        <taxon>Bacilli</taxon>
        <taxon>Bacillales</taxon>
        <taxon>Bacillaceae</taxon>
        <taxon>Bacillus</taxon>
        <taxon>Bacillus cereus group</taxon>
    </lineage>
</organism>
<evidence type="ECO:0000250" key="1">
    <source>
        <dbReference type="UniProtKB" id="Q81ST8"/>
    </source>
</evidence>
<evidence type="ECO:0000269" key="2">
    <source>
    </source>
</evidence>
<evidence type="ECO:0000269" key="3">
    <source>
    </source>
</evidence>
<evidence type="ECO:0000303" key="4">
    <source>
    </source>
</evidence>
<evidence type="ECO:0000303" key="5">
    <source>
    </source>
</evidence>
<evidence type="ECO:0000305" key="6"/>
<evidence type="ECO:0000312" key="7">
    <source>
        <dbReference type="EMBL" id="AAP08514.1"/>
    </source>
</evidence>
<evidence type="ECO:0007744" key="8">
    <source>
        <dbReference type="PDB" id="2IXD"/>
    </source>
</evidence>
<evidence type="ECO:0007829" key="9">
    <source>
        <dbReference type="PDB" id="2IXD"/>
    </source>
</evidence>
<accession>Q81FP2</accession>
<proteinExistence type="evidence at protein level"/>
<dbReference type="EC" id="3.5.1.-" evidence="3"/>
<dbReference type="EMBL" id="AE016877">
    <property type="protein sequence ID" value="AAP08514.1"/>
    <property type="molecule type" value="Genomic_DNA"/>
</dbReference>
<dbReference type="RefSeq" id="NP_831313.1">
    <property type="nucleotide sequence ID" value="NC_004722.1"/>
</dbReference>
<dbReference type="RefSeq" id="WP_000015673.1">
    <property type="nucleotide sequence ID" value="NZ_CP138336.1"/>
</dbReference>
<dbReference type="PDB" id="2IXD">
    <property type="method" value="X-ray"/>
    <property type="resolution" value="1.80 A"/>
    <property type="chains" value="A/B=1-234"/>
</dbReference>
<dbReference type="PDBsum" id="2IXD"/>
<dbReference type="SMR" id="Q81FP2"/>
<dbReference type="STRING" id="226900.BC_1534"/>
<dbReference type="KEGG" id="bce:BC1534"/>
<dbReference type="PATRIC" id="fig|226900.8.peg.1511"/>
<dbReference type="HOGENOM" id="CLU_049311_3_1_9"/>
<dbReference type="OrthoDB" id="9778719at2"/>
<dbReference type="SABIO-RK" id="Q81FP2"/>
<dbReference type="EvolutionaryTrace" id="Q81FP2"/>
<dbReference type="Proteomes" id="UP000001417">
    <property type="component" value="Chromosome"/>
</dbReference>
<dbReference type="GO" id="GO:0019213">
    <property type="term" value="F:deacetylase activity"/>
    <property type="evidence" value="ECO:0007669"/>
    <property type="project" value="InterPro"/>
</dbReference>
<dbReference type="GO" id="GO:0016811">
    <property type="term" value="F:hydrolase activity, acting on carbon-nitrogen (but not peptide) bonds, in linear amides"/>
    <property type="evidence" value="ECO:0000318"/>
    <property type="project" value="GO_Central"/>
</dbReference>
<dbReference type="GO" id="GO:0046872">
    <property type="term" value="F:metal ion binding"/>
    <property type="evidence" value="ECO:0007669"/>
    <property type="project" value="UniProtKB-KW"/>
</dbReference>
<dbReference type="GO" id="GO:0071793">
    <property type="term" value="P:bacillithiol biosynthetic process"/>
    <property type="evidence" value="ECO:0007669"/>
    <property type="project" value="InterPro"/>
</dbReference>
<dbReference type="Gene3D" id="3.40.50.10320">
    <property type="entry name" value="LmbE-like"/>
    <property type="match status" value="1"/>
</dbReference>
<dbReference type="InterPro" id="IPR023842">
    <property type="entry name" value="Bacillithiol_biosynth_BshB1"/>
</dbReference>
<dbReference type="InterPro" id="IPR003737">
    <property type="entry name" value="GlcNAc_PI_deacetylase-related"/>
</dbReference>
<dbReference type="InterPro" id="IPR024078">
    <property type="entry name" value="LmbE-like_dom_sf"/>
</dbReference>
<dbReference type="NCBIfam" id="TIGR04001">
    <property type="entry name" value="thiol_BshB1"/>
    <property type="match status" value="1"/>
</dbReference>
<dbReference type="PANTHER" id="PTHR12993:SF30">
    <property type="entry name" value="N-ACETYL-ALPHA-D-GLUCOSAMINYL L-MALATE DEACETYLASE 1"/>
    <property type="match status" value="1"/>
</dbReference>
<dbReference type="PANTHER" id="PTHR12993">
    <property type="entry name" value="N-ACETYLGLUCOSAMINYL-PHOSPHATIDYLINOSITOL DE-N-ACETYLASE-RELATED"/>
    <property type="match status" value="1"/>
</dbReference>
<dbReference type="Pfam" id="PF02585">
    <property type="entry name" value="PIG-L"/>
    <property type="match status" value="1"/>
</dbReference>
<dbReference type="SUPFAM" id="SSF102588">
    <property type="entry name" value="LmbE-like"/>
    <property type="match status" value="1"/>
</dbReference>
<feature type="chain" id="PRO_0000433161" description="N-acetyl-alpha-D-glucosaminyl L-malate deacetylase 1">
    <location>
        <begin position="1"/>
        <end position="234"/>
    </location>
</feature>
<feature type="binding site" evidence="2 8">
    <location>
        <position position="12"/>
    </location>
    <ligand>
        <name>Zn(2+)</name>
        <dbReference type="ChEBI" id="CHEBI:29105"/>
    </ligand>
</feature>
<feature type="binding site" evidence="2 8">
    <location>
        <position position="15"/>
    </location>
    <ligand>
        <name>Zn(2+)</name>
        <dbReference type="ChEBI" id="CHEBI:29105"/>
    </ligand>
</feature>
<feature type="binding site" evidence="2 8">
    <location>
        <position position="113"/>
    </location>
    <ligand>
        <name>Zn(2+)</name>
        <dbReference type="ChEBI" id="CHEBI:29105"/>
    </ligand>
</feature>
<feature type="mutagenesis site" description="Loss of activity." evidence="3">
    <original>D</original>
    <variation>A</variation>
    <location>
        <position position="112"/>
    </location>
</feature>
<feature type="strand" evidence="9">
    <location>
        <begin position="5"/>
        <end position="12"/>
    </location>
</feature>
<feature type="helix" evidence="9">
    <location>
        <begin position="15"/>
        <end position="29"/>
    </location>
</feature>
<feature type="strand" evidence="9">
    <location>
        <begin position="34"/>
        <end position="40"/>
    </location>
</feature>
<feature type="strand" evidence="9">
    <location>
        <begin position="46"/>
        <end position="48"/>
    </location>
</feature>
<feature type="helix" evidence="9">
    <location>
        <begin position="50"/>
        <end position="64"/>
    </location>
</feature>
<feature type="strand" evidence="9">
    <location>
        <begin position="68"/>
        <end position="74"/>
    </location>
</feature>
<feature type="helix" evidence="9">
    <location>
        <begin position="83"/>
        <end position="96"/>
    </location>
</feature>
<feature type="strand" evidence="9">
    <location>
        <begin position="99"/>
        <end position="104"/>
    </location>
</feature>
<feature type="strand" evidence="9">
    <location>
        <begin position="108"/>
        <end position="110"/>
    </location>
</feature>
<feature type="helix" evidence="9">
    <location>
        <begin position="111"/>
        <end position="127"/>
    </location>
</feature>
<feature type="strand" evidence="9">
    <location>
        <begin position="142"/>
        <end position="147"/>
    </location>
</feature>
<feature type="strand" evidence="9">
    <location>
        <begin position="156"/>
        <end position="160"/>
    </location>
</feature>
<feature type="helix" evidence="9">
    <location>
        <begin position="162"/>
        <end position="164"/>
    </location>
</feature>
<feature type="helix" evidence="9">
    <location>
        <begin position="165"/>
        <end position="173"/>
    </location>
</feature>
<feature type="helix" evidence="9">
    <location>
        <begin position="176"/>
        <end position="179"/>
    </location>
</feature>
<feature type="turn" evidence="9">
    <location>
        <begin position="182"/>
        <end position="184"/>
    </location>
</feature>
<feature type="turn" evidence="9">
    <location>
        <begin position="189"/>
        <end position="191"/>
    </location>
</feature>
<feature type="helix" evidence="9">
    <location>
        <begin position="194"/>
        <end position="208"/>
    </location>
</feature>
<feature type="strand" evidence="9">
    <location>
        <begin position="214"/>
        <end position="221"/>
    </location>
</feature>
<feature type="strand" evidence="9">
    <location>
        <begin position="223"/>
        <end position="227"/>
    </location>
</feature>
<feature type="turn" evidence="9">
    <location>
        <begin position="228"/>
        <end position="230"/>
    </location>
</feature>
<reference key="1">
    <citation type="journal article" date="2003" name="Nature">
        <title>Genome sequence of Bacillus cereus and comparative analysis with Bacillus anthracis.</title>
        <authorList>
            <person name="Ivanova N."/>
            <person name="Sorokin A."/>
            <person name="Anderson I."/>
            <person name="Galleron N."/>
            <person name="Candelon B."/>
            <person name="Kapatral V."/>
            <person name="Bhattacharyya A."/>
            <person name="Reznik G."/>
            <person name="Mikhailova N."/>
            <person name="Lapidus A."/>
            <person name="Chu L."/>
            <person name="Mazur M."/>
            <person name="Goltsman E."/>
            <person name="Larsen N."/>
            <person name="D'Souza M."/>
            <person name="Walunas T."/>
            <person name="Grechkin Y."/>
            <person name="Pusch G."/>
            <person name="Haselkorn R."/>
            <person name="Fonstein M."/>
            <person name="Ehrlich S.D."/>
            <person name="Overbeek R."/>
            <person name="Kyrpides N.C."/>
        </authorList>
    </citation>
    <scope>NUCLEOTIDE SEQUENCE [LARGE SCALE GENOMIC DNA]</scope>
    <source>
        <strain>ATCC 14579 / DSM 31 / CCUG 7414 / JCM 2152 / NBRC 15305 / NCIMB 9373 / NCTC 2599 / NRRL B-3711</strain>
    </source>
</reference>
<reference key="2">
    <citation type="journal article" date="2013" name="Biochem. J.">
        <title>Cross-functionalities of Bacillus deacetylases involved in bacillithiol biosynthesis and bacillithiol-S-conjugate detoxification pathways.</title>
        <authorList>
            <person name="Fang Z."/>
            <person name="Roberts A.A."/>
            <person name="Weidman K."/>
            <person name="Sharma S.V."/>
            <person name="Claiborne A."/>
            <person name="Hamilton C.J."/>
            <person name="Dos Santos P.C."/>
        </authorList>
    </citation>
    <scope>FUNCTION</scope>
    <scope>CATALYTIC ACTIVITY</scope>
    <scope>BIOPHYSICOCHEMICAL PROPERTIES</scope>
    <scope>MUTAGENESIS OF ASP-112</scope>
</reference>
<reference key="3">
    <citation type="journal article" date="2007" name="FEBS J.">
        <title>Crystal structure of the BcZBP, a zinc-binding protein from Bacillus cereus.</title>
        <authorList>
            <person name="Fadouloglou V.E."/>
            <person name="Deli A."/>
            <person name="Glykos N.M."/>
            <person name="Psylinakis E."/>
            <person name="Bouriotis V."/>
            <person name="Kokkinidis M."/>
        </authorList>
    </citation>
    <scope>X-RAY CRYSTALLOGRAPHY (1.80 ANGSTROMS) IN COMPLEX WITH ZINC</scope>
    <scope>FUNCTION AS A DEACETYLASE</scope>
    <scope>COFACTOR</scope>
    <scope>SUBUNIT</scope>
</reference>
<gene>
    <name evidence="1" type="primary">bshB1</name>
    <name evidence="5" type="synonym">bshB</name>
    <name evidence="7" type="ordered locus">BC_1534</name>
</gene>
<name>BSHB1_BACCR</name>
<keyword id="KW-0002">3D-structure</keyword>
<keyword id="KW-0378">Hydrolase</keyword>
<keyword id="KW-0479">Metal-binding</keyword>
<keyword id="KW-1185">Reference proteome</keyword>
<keyword id="KW-0862">Zinc</keyword>
<protein>
    <recommendedName>
        <fullName evidence="6">N-acetyl-alpha-D-glucosaminyl L-malate deacetylase 1</fullName>
        <shortName evidence="6">GlcNAc-Mal deacetylase 1</shortName>
        <ecNumber evidence="3">3.5.1.-</ecNumber>
    </recommendedName>
    <alternativeName>
        <fullName evidence="4">B.cereus zinc-binding protein</fullName>
        <shortName evidence="4">BcZBP</shortName>
    </alternativeName>
</protein>